<feature type="chain" id="PRO_0000375048" description="Ribosomal protein uS12 methylthiotransferase RimO">
    <location>
        <begin position="1"/>
        <end position="427"/>
    </location>
</feature>
<feature type="domain" description="MTTase N-terminal" evidence="1">
    <location>
        <begin position="1"/>
        <end position="116"/>
    </location>
</feature>
<feature type="domain" description="Radical SAM core" evidence="2">
    <location>
        <begin position="131"/>
        <end position="360"/>
    </location>
</feature>
<feature type="domain" description="TRAM" evidence="1">
    <location>
        <begin position="363"/>
        <end position="426"/>
    </location>
</feature>
<feature type="binding site" evidence="1">
    <location>
        <position position="10"/>
    </location>
    <ligand>
        <name>[4Fe-4S] cluster</name>
        <dbReference type="ChEBI" id="CHEBI:49883"/>
        <label>1</label>
    </ligand>
</feature>
<feature type="binding site" evidence="1">
    <location>
        <position position="46"/>
    </location>
    <ligand>
        <name>[4Fe-4S] cluster</name>
        <dbReference type="ChEBI" id="CHEBI:49883"/>
        <label>1</label>
    </ligand>
</feature>
<feature type="binding site" evidence="1">
    <location>
        <position position="79"/>
    </location>
    <ligand>
        <name>[4Fe-4S] cluster</name>
        <dbReference type="ChEBI" id="CHEBI:49883"/>
        <label>1</label>
    </ligand>
</feature>
<feature type="binding site" evidence="1">
    <location>
        <position position="145"/>
    </location>
    <ligand>
        <name>[4Fe-4S] cluster</name>
        <dbReference type="ChEBI" id="CHEBI:49883"/>
        <label>2</label>
        <note>4Fe-4S-S-AdoMet</note>
    </ligand>
</feature>
<feature type="binding site" evidence="1">
    <location>
        <position position="149"/>
    </location>
    <ligand>
        <name>[4Fe-4S] cluster</name>
        <dbReference type="ChEBI" id="CHEBI:49883"/>
        <label>2</label>
        <note>4Fe-4S-S-AdoMet</note>
    </ligand>
</feature>
<feature type="binding site" evidence="1">
    <location>
        <position position="152"/>
    </location>
    <ligand>
        <name>[4Fe-4S] cluster</name>
        <dbReference type="ChEBI" id="CHEBI:49883"/>
        <label>2</label>
        <note>4Fe-4S-S-AdoMet</note>
    </ligand>
</feature>
<organism>
    <name type="scientific">Thermosipho africanus (strain TCF52B)</name>
    <dbReference type="NCBI Taxonomy" id="484019"/>
    <lineage>
        <taxon>Bacteria</taxon>
        <taxon>Thermotogati</taxon>
        <taxon>Thermotogota</taxon>
        <taxon>Thermotogae</taxon>
        <taxon>Thermotogales</taxon>
        <taxon>Fervidobacteriaceae</taxon>
        <taxon>Thermosipho</taxon>
    </lineage>
</organism>
<gene>
    <name evidence="1" type="primary">rimO</name>
    <name type="ordered locus">THA_1459</name>
</gene>
<proteinExistence type="inferred from homology"/>
<evidence type="ECO:0000255" key="1">
    <source>
        <dbReference type="HAMAP-Rule" id="MF_01865"/>
    </source>
</evidence>
<evidence type="ECO:0000255" key="2">
    <source>
        <dbReference type="PROSITE-ProRule" id="PRU01266"/>
    </source>
</evidence>
<keyword id="KW-0004">4Fe-4S</keyword>
<keyword id="KW-0963">Cytoplasm</keyword>
<keyword id="KW-0408">Iron</keyword>
<keyword id="KW-0411">Iron-sulfur</keyword>
<keyword id="KW-0479">Metal-binding</keyword>
<keyword id="KW-1185">Reference proteome</keyword>
<keyword id="KW-0949">S-adenosyl-L-methionine</keyword>
<keyword id="KW-0808">Transferase</keyword>
<dbReference type="EC" id="2.8.4.4" evidence="1"/>
<dbReference type="EMBL" id="CP001185">
    <property type="protein sequence ID" value="ACJ75902.1"/>
    <property type="molecule type" value="Genomic_DNA"/>
</dbReference>
<dbReference type="RefSeq" id="WP_012580238.1">
    <property type="nucleotide sequence ID" value="NC_011653.1"/>
</dbReference>
<dbReference type="SMR" id="B7ID25"/>
<dbReference type="STRING" id="484019.THA_1459"/>
<dbReference type="KEGG" id="taf:THA_1459"/>
<dbReference type="eggNOG" id="COG0621">
    <property type="taxonomic scope" value="Bacteria"/>
</dbReference>
<dbReference type="HOGENOM" id="CLU_018697_0_1_0"/>
<dbReference type="OrthoDB" id="9805215at2"/>
<dbReference type="Proteomes" id="UP000002453">
    <property type="component" value="Chromosome"/>
</dbReference>
<dbReference type="GO" id="GO:0005829">
    <property type="term" value="C:cytosol"/>
    <property type="evidence" value="ECO:0007669"/>
    <property type="project" value="TreeGrafter"/>
</dbReference>
<dbReference type="GO" id="GO:0051539">
    <property type="term" value="F:4 iron, 4 sulfur cluster binding"/>
    <property type="evidence" value="ECO:0007669"/>
    <property type="project" value="UniProtKB-UniRule"/>
</dbReference>
<dbReference type="GO" id="GO:0035599">
    <property type="term" value="F:aspartic acid methylthiotransferase activity"/>
    <property type="evidence" value="ECO:0007669"/>
    <property type="project" value="TreeGrafter"/>
</dbReference>
<dbReference type="GO" id="GO:0046872">
    <property type="term" value="F:metal ion binding"/>
    <property type="evidence" value="ECO:0007669"/>
    <property type="project" value="UniProtKB-KW"/>
</dbReference>
<dbReference type="GO" id="GO:0103039">
    <property type="term" value="F:protein methylthiotransferase activity"/>
    <property type="evidence" value="ECO:0007669"/>
    <property type="project" value="UniProtKB-EC"/>
</dbReference>
<dbReference type="GO" id="GO:0006400">
    <property type="term" value="P:tRNA modification"/>
    <property type="evidence" value="ECO:0007669"/>
    <property type="project" value="InterPro"/>
</dbReference>
<dbReference type="CDD" id="cd01335">
    <property type="entry name" value="Radical_SAM"/>
    <property type="match status" value="1"/>
</dbReference>
<dbReference type="FunFam" id="3.80.30.20:FF:000001">
    <property type="entry name" value="tRNA-2-methylthio-N(6)-dimethylallyladenosine synthase 2"/>
    <property type="match status" value="1"/>
</dbReference>
<dbReference type="Gene3D" id="3.40.50.12160">
    <property type="entry name" value="Methylthiotransferase, N-terminal domain"/>
    <property type="match status" value="1"/>
</dbReference>
<dbReference type="Gene3D" id="2.40.50.140">
    <property type="entry name" value="Nucleic acid-binding proteins"/>
    <property type="match status" value="1"/>
</dbReference>
<dbReference type="Gene3D" id="3.80.30.20">
    <property type="entry name" value="tm_1862 like domain"/>
    <property type="match status" value="1"/>
</dbReference>
<dbReference type="HAMAP" id="MF_01865">
    <property type="entry name" value="MTTase_RimO"/>
    <property type="match status" value="1"/>
</dbReference>
<dbReference type="InterPro" id="IPR006638">
    <property type="entry name" value="Elp3/MiaA/NifB-like_rSAM"/>
</dbReference>
<dbReference type="InterPro" id="IPR005839">
    <property type="entry name" value="Methylthiotransferase"/>
</dbReference>
<dbReference type="InterPro" id="IPR020612">
    <property type="entry name" value="Methylthiotransferase_CS"/>
</dbReference>
<dbReference type="InterPro" id="IPR013848">
    <property type="entry name" value="Methylthiotransferase_N"/>
</dbReference>
<dbReference type="InterPro" id="IPR038135">
    <property type="entry name" value="Methylthiotransferase_N_sf"/>
</dbReference>
<dbReference type="InterPro" id="IPR012340">
    <property type="entry name" value="NA-bd_OB-fold"/>
</dbReference>
<dbReference type="InterPro" id="IPR005840">
    <property type="entry name" value="Ribosomal_uS12_MeSTrfase_RimO"/>
</dbReference>
<dbReference type="InterPro" id="IPR007197">
    <property type="entry name" value="rSAM"/>
</dbReference>
<dbReference type="InterPro" id="IPR023404">
    <property type="entry name" value="rSAM_horseshoe"/>
</dbReference>
<dbReference type="InterPro" id="IPR002792">
    <property type="entry name" value="TRAM_dom"/>
</dbReference>
<dbReference type="NCBIfam" id="TIGR01125">
    <property type="entry name" value="30S ribosomal protein S12 methylthiotransferase RimO"/>
    <property type="match status" value="1"/>
</dbReference>
<dbReference type="NCBIfam" id="TIGR00089">
    <property type="entry name" value="MiaB/RimO family radical SAM methylthiotransferase"/>
    <property type="match status" value="1"/>
</dbReference>
<dbReference type="PANTHER" id="PTHR43837">
    <property type="entry name" value="RIBOSOMAL PROTEIN S12 METHYLTHIOTRANSFERASE RIMO"/>
    <property type="match status" value="1"/>
</dbReference>
<dbReference type="PANTHER" id="PTHR43837:SF1">
    <property type="entry name" value="RIBOSOMAL PROTEIN US12 METHYLTHIOTRANSFERASE RIMO"/>
    <property type="match status" value="1"/>
</dbReference>
<dbReference type="Pfam" id="PF04055">
    <property type="entry name" value="Radical_SAM"/>
    <property type="match status" value="1"/>
</dbReference>
<dbReference type="Pfam" id="PF18693">
    <property type="entry name" value="TRAM_2"/>
    <property type="match status" value="1"/>
</dbReference>
<dbReference type="Pfam" id="PF00919">
    <property type="entry name" value="UPF0004"/>
    <property type="match status" value="1"/>
</dbReference>
<dbReference type="SFLD" id="SFLDG01082">
    <property type="entry name" value="B12-binding_domain_containing"/>
    <property type="match status" value="1"/>
</dbReference>
<dbReference type="SFLD" id="SFLDG01061">
    <property type="entry name" value="methylthiotransferase"/>
    <property type="match status" value="1"/>
</dbReference>
<dbReference type="SFLD" id="SFLDF00274">
    <property type="entry name" value="ribosomal_protein_S12_methylth"/>
    <property type="match status" value="1"/>
</dbReference>
<dbReference type="SMART" id="SM00729">
    <property type="entry name" value="Elp3"/>
    <property type="match status" value="1"/>
</dbReference>
<dbReference type="SUPFAM" id="SSF102114">
    <property type="entry name" value="Radical SAM enzymes"/>
    <property type="match status" value="1"/>
</dbReference>
<dbReference type="PROSITE" id="PS51449">
    <property type="entry name" value="MTTASE_N"/>
    <property type="match status" value="1"/>
</dbReference>
<dbReference type="PROSITE" id="PS01278">
    <property type="entry name" value="MTTASE_RADICAL"/>
    <property type="match status" value="1"/>
</dbReference>
<dbReference type="PROSITE" id="PS51918">
    <property type="entry name" value="RADICAL_SAM"/>
    <property type="match status" value="1"/>
</dbReference>
<dbReference type="PROSITE" id="PS50926">
    <property type="entry name" value="TRAM"/>
    <property type="match status" value="1"/>
</dbReference>
<sequence>MNFYVDVLGCPKNEADCALLKAYLEKKGNNIVNTIEDADAVVIDTCGFILEAKKESIEEILTYLELKKERDLKVYVTGCLVQRYGEELKKEIPEVDGWFGILPPEKIAENIGKESIIPKNPEPVYEFGGRVDEKQYAYVKISDGCDRACSFCTIPLFKGSFKSRKIDDIVKEVEYLILSGKKEIILVAQDTTGYGIDLYGKQMLPELLKRINDIPGDFWIRVMYMHPDHITDEIIEAFSYDKVLKYFDIPVQHGSDKVLKLMNRTKKSEHILKLVEKIRKRYEDAVLRTSIIVGFPGETDEDFEELLDFIKMVRFERLGAFIYSDEEEAPSYHFEGKVPEIVAQERLDILMEEQSKISFEINEKMVGKTFKVLFDEEEEGVLIARSYMDAPEIDGNIFVPGKFEEGFFKVKVTSADVYDLEGKIVEE</sequence>
<protein>
    <recommendedName>
        <fullName evidence="1">Ribosomal protein uS12 methylthiotransferase RimO</fullName>
        <shortName evidence="1">uS12 MTTase</shortName>
        <shortName evidence="1">uS12 methylthiotransferase</shortName>
        <ecNumber evidence="1">2.8.4.4</ecNumber>
    </recommendedName>
    <alternativeName>
        <fullName evidence="1">Ribosomal protein uS12 (aspartate-C(3))-methylthiotransferase</fullName>
    </alternativeName>
    <alternativeName>
        <fullName evidence="1">Ribosome maturation factor RimO</fullName>
    </alternativeName>
</protein>
<reference key="1">
    <citation type="journal article" date="2009" name="J. Bacteriol.">
        <title>The genome of Thermosipho africanus TCF52B: lateral genetic connections to the Firmicutes and Archaea.</title>
        <authorList>
            <person name="Nesboe C.L."/>
            <person name="Bapteste E."/>
            <person name="Curtis B."/>
            <person name="Dahle H."/>
            <person name="Lopez P."/>
            <person name="Macleod D."/>
            <person name="Dlutek M."/>
            <person name="Bowman S."/>
            <person name="Zhaxybayeva O."/>
            <person name="Birkeland N.-K."/>
            <person name="Doolittle W.F."/>
        </authorList>
    </citation>
    <scope>NUCLEOTIDE SEQUENCE [LARGE SCALE GENOMIC DNA]</scope>
    <source>
        <strain>TCF52B</strain>
    </source>
</reference>
<comment type="function">
    <text evidence="1">Catalyzes the methylthiolation of an aspartic acid residue of ribosomal protein uS12.</text>
</comment>
<comment type="catalytic activity">
    <reaction evidence="1">
        <text>L-aspartate(89)-[ribosomal protein uS12]-hydrogen + (sulfur carrier)-SH + AH2 + 2 S-adenosyl-L-methionine = 3-methylsulfanyl-L-aspartate(89)-[ribosomal protein uS12]-hydrogen + (sulfur carrier)-H + 5'-deoxyadenosine + L-methionine + A + S-adenosyl-L-homocysteine + 2 H(+)</text>
        <dbReference type="Rhea" id="RHEA:37087"/>
        <dbReference type="Rhea" id="RHEA-COMP:10460"/>
        <dbReference type="Rhea" id="RHEA-COMP:10461"/>
        <dbReference type="Rhea" id="RHEA-COMP:14737"/>
        <dbReference type="Rhea" id="RHEA-COMP:14739"/>
        <dbReference type="ChEBI" id="CHEBI:13193"/>
        <dbReference type="ChEBI" id="CHEBI:15378"/>
        <dbReference type="ChEBI" id="CHEBI:17319"/>
        <dbReference type="ChEBI" id="CHEBI:17499"/>
        <dbReference type="ChEBI" id="CHEBI:29917"/>
        <dbReference type="ChEBI" id="CHEBI:29961"/>
        <dbReference type="ChEBI" id="CHEBI:57844"/>
        <dbReference type="ChEBI" id="CHEBI:57856"/>
        <dbReference type="ChEBI" id="CHEBI:59789"/>
        <dbReference type="ChEBI" id="CHEBI:64428"/>
        <dbReference type="ChEBI" id="CHEBI:73599"/>
        <dbReference type="EC" id="2.8.4.4"/>
    </reaction>
</comment>
<comment type="cofactor">
    <cofactor evidence="1">
        <name>[4Fe-4S] cluster</name>
        <dbReference type="ChEBI" id="CHEBI:49883"/>
    </cofactor>
    <text evidence="1">Binds 2 [4Fe-4S] clusters. One cluster is coordinated with 3 cysteines and an exchangeable S-adenosyl-L-methionine.</text>
</comment>
<comment type="subcellular location">
    <subcellularLocation>
        <location evidence="1">Cytoplasm</location>
    </subcellularLocation>
</comment>
<comment type="similarity">
    <text evidence="1">Belongs to the methylthiotransferase family. RimO subfamily.</text>
</comment>
<name>RIMO_THEAB</name>
<accession>B7ID25</accession>